<proteinExistence type="evidence at protein level"/>
<gene>
    <name evidence="9 13" type="primary">Calhm3</name>
</gene>
<sequence length="347" mass="39328">MDRFRMLFQHLQSSSESVMNGICLLLAAVTVKIYSSLDFNCPCLERYNALYGLGLLLTPPLALFLCGLLVNRQSVLMVEEWRRPAGHRRKDLGIIRYMCSSVLQRALAAPLVWILLALLDGKCFVCAFSNSVDPEKFLDFANMTPRQVQLFLAKVPCKEDELVKNSPARKAVSRYLRCLSQAIGWSITLLVIVVAFLARCLRPCFDQTVFLQRRYWSNYMDLEQKLFDETCCEHARDFAHRCVLHFFANMQSELRALGLRRDPAGGIPESQESSEPPELREDRDSGNGKAHLRAISSREQVDQLLSTWYSSKPPLDLAASPRRWGPGLNHRAPIAAPGTKLCHQLNV</sequence>
<dbReference type="EMBL" id="LC270871">
    <property type="protein sequence ID" value="BBB16320.1"/>
    <property type="molecule type" value="mRNA"/>
</dbReference>
<dbReference type="EMBL" id="AC124724">
    <property type="status" value="NOT_ANNOTATED_CDS"/>
    <property type="molecule type" value="Genomic_DNA"/>
</dbReference>
<dbReference type="SMR" id="J3QMI4"/>
<dbReference type="FunCoup" id="J3QMI4">
    <property type="interactions" value="602"/>
</dbReference>
<dbReference type="STRING" id="10090.ENSMUSP00000136302"/>
<dbReference type="GlyGen" id="J3QMI4">
    <property type="glycosylation" value="1 site"/>
</dbReference>
<dbReference type="PhosphoSitePlus" id="J3QMI4"/>
<dbReference type="SwissPalm" id="J3QMI4"/>
<dbReference type="PaxDb" id="10090-ENSMUSP00000136302"/>
<dbReference type="Antibodypedia" id="3118">
    <property type="antibodies" value="113 antibodies from 21 providers"/>
</dbReference>
<dbReference type="Ensembl" id="ENSMUST00000178630.2">
    <property type="protein sequence ID" value="ENSMUSP00000136302.2"/>
    <property type="gene ID" value="ENSMUSG00000094219.2"/>
</dbReference>
<dbReference type="AGR" id="MGI:3645665"/>
<dbReference type="MGI" id="MGI:3645665">
    <property type="gene designation" value="Calhm3"/>
</dbReference>
<dbReference type="VEuPathDB" id="HostDB:ENSMUSG00000094219"/>
<dbReference type="eggNOG" id="ENOG502QRUK">
    <property type="taxonomic scope" value="Eukaryota"/>
</dbReference>
<dbReference type="GeneTree" id="ENSGT01030000234610"/>
<dbReference type="HOGENOM" id="CLU_069286_0_0_1"/>
<dbReference type="InParanoid" id="J3QMI4"/>
<dbReference type="OMA" id="RCWSQAL"/>
<dbReference type="OrthoDB" id="5978124at2759"/>
<dbReference type="PhylomeDB" id="J3QMI4"/>
<dbReference type="TreeFam" id="TF329085"/>
<dbReference type="PRO" id="PR:J3QMI4"/>
<dbReference type="Proteomes" id="UP000000589">
    <property type="component" value="Chromosome 19"/>
</dbReference>
<dbReference type="RNAct" id="J3QMI4">
    <property type="molecule type" value="protein"/>
</dbReference>
<dbReference type="Bgee" id="ENSMUSG00000094219">
    <property type="expression patterns" value="Expressed in islet of Langerhans and 3 other cell types or tissues"/>
</dbReference>
<dbReference type="GO" id="GO:0016323">
    <property type="term" value="C:basolateral plasma membrane"/>
    <property type="evidence" value="ECO:0000314"/>
    <property type="project" value="UniProtKB"/>
</dbReference>
<dbReference type="GO" id="GO:0005886">
    <property type="term" value="C:plasma membrane"/>
    <property type="evidence" value="ECO:0000314"/>
    <property type="project" value="UniProtKB"/>
</dbReference>
<dbReference type="GO" id="GO:0005262">
    <property type="term" value="F:calcium channel activity"/>
    <property type="evidence" value="ECO:0007669"/>
    <property type="project" value="UniProtKB-KW"/>
</dbReference>
<dbReference type="GO" id="GO:0022832">
    <property type="term" value="F:voltage-gated channel activity"/>
    <property type="evidence" value="ECO:0000315"/>
    <property type="project" value="UniProtKB"/>
</dbReference>
<dbReference type="GO" id="GO:0005244">
    <property type="term" value="F:voltage-gated monoatomic ion channel activity"/>
    <property type="evidence" value="ECO:0000314"/>
    <property type="project" value="UniProtKB"/>
</dbReference>
<dbReference type="GO" id="GO:1904669">
    <property type="term" value="P:ATP export"/>
    <property type="evidence" value="ECO:0000314"/>
    <property type="project" value="UniProtKB"/>
</dbReference>
<dbReference type="GO" id="GO:0015867">
    <property type="term" value="P:ATP transport"/>
    <property type="evidence" value="ECO:0000314"/>
    <property type="project" value="UniProtKB"/>
</dbReference>
<dbReference type="GO" id="GO:0051291">
    <property type="term" value="P:protein heterooligomerization"/>
    <property type="evidence" value="ECO:0000314"/>
    <property type="project" value="UniProtKB"/>
</dbReference>
<dbReference type="GO" id="GO:0050909">
    <property type="term" value="P:sensory perception of taste"/>
    <property type="evidence" value="ECO:0000314"/>
    <property type="project" value="UniProtKB"/>
</dbReference>
<dbReference type="InterPro" id="IPR029569">
    <property type="entry name" value="CALHM"/>
</dbReference>
<dbReference type="PANTHER" id="PTHR32261">
    <property type="entry name" value="CALCIUM HOMEOSTASIS MODULATOR PROTEIN"/>
    <property type="match status" value="1"/>
</dbReference>
<dbReference type="PANTHER" id="PTHR32261:SF7">
    <property type="entry name" value="CALCIUM HOMEOSTASIS MODULATOR PROTEIN 3"/>
    <property type="match status" value="1"/>
</dbReference>
<dbReference type="Pfam" id="PF14798">
    <property type="entry name" value="Ca_hom_mod"/>
    <property type="match status" value="1"/>
</dbReference>
<feature type="chain" id="PRO_0000449205" description="Calcium homeostasis modulator protein 3">
    <location>
        <begin position="1"/>
        <end position="347"/>
    </location>
</feature>
<feature type="topological domain" description="Cytoplasmic" evidence="10">
    <location>
        <begin position="1"/>
        <end position="20"/>
    </location>
</feature>
<feature type="transmembrane region" description="Helical; Name=S1" evidence="1 2">
    <location>
        <begin position="21"/>
        <end position="36"/>
    </location>
</feature>
<feature type="topological domain" description="Extracellular" evidence="10">
    <location>
        <begin position="37"/>
        <end position="48"/>
    </location>
</feature>
<feature type="transmembrane region" description="Helical; Name=S2" evidence="1 2">
    <location>
        <begin position="49"/>
        <end position="71"/>
    </location>
</feature>
<feature type="topological domain" description="Cytoplasmic" evidence="10">
    <location>
        <begin position="72"/>
        <end position="98"/>
    </location>
</feature>
<feature type="transmembrane region" description="Helical; Name=S3" evidence="1 2">
    <location>
        <begin position="99"/>
        <end position="124"/>
    </location>
</feature>
<feature type="topological domain" description="Extracellular" evidence="10">
    <location>
        <begin position="125"/>
        <end position="176"/>
    </location>
</feature>
<feature type="transmembrane region" description="Helical; Name=S4" evidence="1 2">
    <location>
        <begin position="177"/>
        <end position="202"/>
    </location>
</feature>
<feature type="topological domain" description="Cytoplasmic" evidence="10">
    <location>
        <begin position="203"/>
        <end position="347"/>
    </location>
</feature>
<feature type="region of interest" description="Central pore" evidence="1">
    <location>
        <begin position="9"/>
        <end position="36"/>
    </location>
</feature>
<feature type="region of interest" description="Disordered" evidence="4">
    <location>
        <begin position="265"/>
        <end position="290"/>
    </location>
</feature>
<feature type="compositionally biased region" description="Basic and acidic residues" evidence="4">
    <location>
        <begin position="277"/>
        <end position="286"/>
    </location>
</feature>
<feature type="lipid moiety-binding region" description="S-palmitoyl cysteine" evidence="7">
    <location>
        <position position="99"/>
    </location>
</feature>
<feature type="lipid moiety-binding region" description="S-palmitoyl cysteine" evidence="7">
    <location>
        <position position="200"/>
    </location>
</feature>
<feature type="lipid moiety-binding region" description="S-palmitoyl cysteine" evidence="7">
    <location>
        <position position="204"/>
    </location>
</feature>
<feature type="glycosylation site" description="N-linked (GlcNAc...) asparagine" evidence="12">
    <location>
        <position position="142"/>
    </location>
</feature>
<feature type="disulfide bond" evidence="2">
    <location>
        <begin position="41"/>
        <end position="126"/>
    </location>
</feature>
<feature type="disulfide bond" evidence="2">
    <location>
        <begin position="43"/>
        <end position="157"/>
    </location>
</feature>
<feature type="mutagenesis site" description="Affects basolateral membrane sorting in vitro but not in vivo; when associated with A-219 and A-222." evidence="6">
    <original>LM</original>
    <variation>AA</variation>
    <location>
        <begin position="76"/>
        <end position="77"/>
    </location>
</feature>
<feature type="mutagenesis site" description="Loss of palmitoylation; when associated with S-200 and S-204. Markedly decreases ATP transport via CALHM1:CALHM3 channel. Does not affect channel assembly or trafficking to plasma membrane." evidence="7">
    <original>C</original>
    <variation>S</variation>
    <location>
        <position position="99"/>
    </location>
</feature>
<feature type="mutagenesis site" description="Loss of N-glycosylation. Reduces channel conductance. Does not affect channel trafficking to plasma membrane." evidence="7">
    <original>N</original>
    <variation>Q</variation>
    <location>
        <position position="142"/>
    </location>
</feature>
<feature type="mutagenesis site" description="Loss of palmitoylation; when associated with S-99 and S-204. Decreases ATP transport via CALHM1:CALHM3 channel. Does not affect channel assembly or trafficking to plasma membrane." evidence="7">
    <original>C</original>
    <variation>S</variation>
    <location>
        <position position="200"/>
    </location>
</feature>
<feature type="mutagenesis site" description="Loss of palmitoylation; when associated with S-99 and S-200. Decreases ATP transport via CALHM1:CALHM3 channel. Does not affect channel assembly or trafficking to plasma membrane." evidence="7">
    <original>C</original>
    <variation>S</variation>
    <location>
        <position position="204"/>
    </location>
</feature>
<feature type="mutagenesis site" description="Affects basolateral membrane sorting in vitro but not in vivo; when associated with 76-A-A-77 and A-222." evidence="6">
    <original>Y</original>
    <variation>A</variation>
    <location>
        <position position="219"/>
    </location>
</feature>
<feature type="mutagenesis site" description="Affects basolateral membrane sorting in vitro but not in vivo; when associated with 76-A-A-77 and A-219." evidence="6">
    <original>L</original>
    <variation>A</variation>
    <location>
        <position position="222"/>
    </location>
</feature>
<accession>J3QMI4</accession>
<reference key="1">
    <citation type="journal article" date="2018" name="Neuron">
        <title>CALHM3 Is Essential for Rapid Ion Channel-Mediated Purinergic Neurotransmission of GPCR-Mediated Tastes.</title>
        <authorList>
            <person name="Ma Z."/>
            <person name="Taruno A."/>
            <person name="Ohmoto M."/>
            <person name="Jyotaki M."/>
            <person name="Lim J.C."/>
            <person name="Miyazaki H."/>
            <person name="Niisato N."/>
            <person name="Marunaka Y."/>
            <person name="Lee R.J."/>
            <person name="Hoff H."/>
            <person name="Payne R."/>
            <person name="Demuro A."/>
            <person name="Parker I."/>
            <person name="Mitchell C.H."/>
            <person name="Henao-Mejia J."/>
            <person name="Tanis J.E."/>
            <person name="Matsumoto I."/>
            <person name="Tordoff M.G."/>
            <person name="Foskett J.K."/>
        </authorList>
    </citation>
    <scope>NUCLEOTIDE SEQUENCE [MRNA]</scope>
    <scope>FUNCTION</scope>
    <scope>TRANSPORTER ACTIVITY</scope>
    <scope>INTERACTION WITH CALHM1</scope>
    <scope>SUBCELLULAR LOCATION</scope>
    <scope>DISRUPTION PHENOTYPE</scope>
    <source>
        <strain>C57BL/6J</strain>
        <tissue>Tongue epithelium</tissue>
    </source>
</reference>
<reference key="2">
    <citation type="journal article" date="2009" name="PLoS Biol.">
        <title>Lineage-specific biology revealed by a finished genome assembly of the mouse.</title>
        <authorList>
            <person name="Church D.M."/>
            <person name="Goodstadt L."/>
            <person name="Hillier L.W."/>
            <person name="Zody M.C."/>
            <person name="Goldstein S."/>
            <person name="She X."/>
            <person name="Bult C.J."/>
            <person name="Agarwala R."/>
            <person name="Cherry J.L."/>
            <person name="DiCuccio M."/>
            <person name="Hlavina W."/>
            <person name="Kapustin Y."/>
            <person name="Meric P."/>
            <person name="Maglott D."/>
            <person name="Birtle Z."/>
            <person name="Marques A.C."/>
            <person name="Graves T."/>
            <person name="Zhou S."/>
            <person name="Teague B."/>
            <person name="Potamousis K."/>
            <person name="Churas C."/>
            <person name="Place M."/>
            <person name="Herschleb J."/>
            <person name="Runnheim R."/>
            <person name="Forrest D."/>
            <person name="Amos-Landgraf J."/>
            <person name="Schwartz D.C."/>
            <person name="Cheng Z."/>
            <person name="Lindblad-Toh K."/>
            <person name="Eichler E.E."/>
            <person name="Ponting C.P."/>
        </authorList>
    </citation>
    <scope>NUCLEOTIDE SEQUENCE [LARGE SCALE GENOMIC DNA]</scope>
    <source>
        <strain>C57BL/6J</strain>
    </source>
</reference>
<reference key="3">
    <citation type="journal article" date="2019" name="Sci. Rep.">
        <title>CALHM1/CALHM3 channel is intrinsically sorted to the basolateral membrane of epithelial cells including taste cells.</title>
        <authorList>
            <person name="Kashio M."/>
            <person name="Wei-Qi G."/>
            <person name="Ohsaki Y."/>
            <person name="Kido M.A."/>
            <person name="Taruno A."/>
        </authorList>
    </citation>
    <scope>SUBCELLULAR LOCATION</scope>
    <scope>TISSUE SPECIFICITY</scope>
    <scope>MUTAGENESIS OF 76-LEU-MET-77; TYR-219 AND LEU-222</scope>
</reference>
<reference key="4">
    <citation type="journal article" date="2021" name="FASEB J.">
        <title>Posttranslational regulation of CALHM1/3 channel: N-linked glycosylation and S-palmitoylation.</title>
        <authorList>
            <person name="Okui M."/>
            <person name="Murakami T."/>
            <person name="Sun H."/>
            <person name="Ikeshita C."/>
            <person name="Kanamura N."/>
            <person name="Taruno A."/>
        </authorList>
    </citation>
    <scope>FUNCTION</scope>
    <scope>TRANSPORTER ACTIVITY</scope>
    <scope>GLYCOSYLATION AT ASN-142</scope>
    <scope>PALMITOYLATION AT CYS-99; CYS-200 AND CYS-204</scope>
    <scope>MUTAGENESIS OF CYS-99; ASN-142; CYS-200 AND CYS-204</scope>
</reference>
<protein>
    <recommendedName>
        <fullName evidence="8">Calcium homeostasis modulator protein 3</fullName>
    </recommendedName>
</protein>
<evidence type="ECO:0000250" key="1">
    <source>
        <dbReference type="UniProtKB" id="H2MCM1"/>
    </source>
</evidence>
<evidence type="ECO:0000250" key="2">
    <source>
        <dbReference type="UniProtKB" id="Q8IU99"/>
    </source>
</evidence>
<evidence type="ECO:0000255" key="3"/>
<evidence type="ECO:0000256" key="4">
    <source>
        <dbReference type="SAM" id="MobiDB-lite"/>
    </source>
</evidence>
<evidence type="ECO:0000269" key="5">
    <source>
    </source>
</evidence>
<evidence type="ECO:0000269" key="6">
    <source>
    </source>
</evidence>
<evidence type="ECO:0000269" key="7">
    <source>
    </source>
</evidence>
<evidence type="ECO:0000303" key="8">
    <source>
    </source>
</evidence>
<evidence type="ECO:0000303" key="9">
    <source>
    </source>
</evidence>
<evidence type="ECO:0000305" key="10"/>
<evidence type="ECO:0000305" key="11">
    <source>
    </source>
</evidence>
<evidence type="ECO:0000305" key="12">
    <source>
    </source>
</evidence>
<evidence type="ECO:0000312" key="13">
    <source>
        <dbReference type="MGI" id="MGI:3645665"/>
    </source>
</evidence>
<comment type="function">
    <text evidence="5 7">Pore-forming subunit of gustatory voltage-gated ion channels required for sensory perception of sweet, bitter and umami tastes. With CALHM1 forms a fast-activating voltage-gated ATP-release channel in type II taste bud cells, ATP acting as a neurotransmitter to activate afferent neural gustatory pathways. Acts both as a voltage-gated and calcium-activated ion channel: mediates neuronal excitability in response to membrane depolarization and low extracellular Ca(2+) concentration. Has poor ion selectivity and forms a wide pore (around 14 Angstroms) that mediates permeation of small ions including Ca(2+), Na(+), K(+) and Cl(-), as well as larger ions such as ATP(4-).</text>
</comment>
<comment type="catalytic activity">
    <reaction evidence="5 7">
        <text>ATP(in) = ATP(out)</text>
        <dbReference type="Rhea" id="RHEA:75687"/>
        <dbReference type="ChEBI" id="CHEBI:30616"/>
    </reaction>
</comment>
<comment type="catalytic activity">
    <reaction evidence="5">
        <text>Ca(2+)(in) = Ca(2+)(out)</text>
        <dbReference type="Rhea" id="RHEA:29671"/>
        <dbReference type="ChEBI" id="CHEBI:29108"/>
    </reaction>
</comment>
<comment type="catalytic activity">
    <reaction evidence="5">
        <text>Na(+)(in) = Na(+)(out)</text>
        <dbReference type="Rhea" id="RHEA:34963"/>
        <dbReference type="ChEBI" id="CHEBI:29101"/>
    </reaction>
</comment>
<comment type="catalytic activity">
    <reaction evidence="5">
        <text>K(+)(in) = K(+)(out)</text>
        <dbReference type="Rhea" id="RHEA:29463"/>
        <dbReference type="ChEBI" id="CHEBI:29103"/>
    </reaction>
</comment>
<comment type="catalytic activity">
    <reaction evidence="5">
        <text>chloride(in) = chloride(out)</text>
        <dbReference type="Rhea" id="RHEA:29823"/>
        <dbReference type="ChEBI" id="CHEBI:17996"/>
    </reaction>
</comment>
<comment type="subunit">
    <text evidence="5">Associates with CALHM1 as a pore-forming subunit in a hetero-hexameric channel complex.</text>
</comment>
<comment type="subcellular location">
    <subcellularLocation>
        <location evidence="6 11">Basolateral cell membrane</location>
        <topology evidence="3">Multi-pass membrane protein</topology>
    </subcellularLocation>
    <text evidence="6">Localizes to the basolateral membrane of epithelial cells including taste cells.</text>
</comment>
<comment type="tissue specificity">
    <text evidence="6">Expressed in taste bud cells.</text>
</comment>
<comment type="PTM">
    <text evidence="7">N-glycosylated.</text>
</comment>
<comment type="PTM">
    <text evidence="7">Palmitoylated by ZDHHC3 and ZDHHC15. Palmitoylation positively regulates CALHM1:CALHM3 channel conductance.</text>
</comment>
<comment type="disruption phenotype">
    <text evidence="5">Genetic deletion eliminates voltage-gated nonselective currents and taste-evoked ATP release in type II TBCs without affecting cell excitability or diminishing Calhm1 expression, and results in the loss of responses to sweet, umami and bitter tastes.</text>
</comment>
<comment type="similarity">
    <text evidence="10">Belongs to the CALHM family.</text>
</comment>
<organism>
    <name type="scientific">Mus musculus</name>
    <name type="common">Mouse</name>
    <dbReference type="NCBI Taxonomy" id="10090"/>
    <lineage>
        <taxon>Eukaryota</taxon>
        <taxon>Metazoa</taxon>
        <taxon>Chordata</taxon>
        <taxon>Craniata</taxon>
        <taxon>Vertebrata</taxon>
        <taxon>Euteleostomi</taxon>
        <taxon>Mammalia</taxon>
        <taxon>Eutheria</taxon>
        <taxon>Euarchontoglires</taxon>
        <taxon>Glires</taxon>
        <taxon>Rodentia</taxon>
        <taxon>Myomorpha</taxon>
        <taxon>Muroidea</taxon>
        <taxon>Muridae</taxon>
        <taxon>Murinae</taxon>
        <taxon>Mus</taxon>
        <taxon>Mus</taxon>
    </lineage>
</organism>
<keyword id="KW-0106">Calcium</keyword>
<keyword id="KW-0107">Calcium channel</keyword>
<keyword id="KW-0109">Calcium transport</keyword>
<keyword id="KW-1003">Cell membrane</keyword>
<keyword id="KW-1015">Disulfide bond</keyword>
<keyword id="KW-0325">Glycoprotein</keyword>
<keyword id="KW-0407">Ion channel</keyword>
<keyword id="KW-0406">Ion transport</keyword>
<keyword id="KW-0449">Lipoprotein</keyword>
<keyword id="KW-0472">Membrane</keyword>
<keyword id="KW-0564">Palmitate</keyword>
<keyword id="KW-1185">Reference proteome</keyword>
<keyword id="KW-0716">Sensory transduction</keyword>
<keyword id="KW-0919">Taste</keyword>
<keyword id="KW-0812">Transmembrane</keyword>
<keyword id="KW-1133">Transmembrane helix</keyword>
<keyword id="KW-0813">Transport</keyword>
<name>CAHM3_MOUSE</name>